<protein>
    <recommendedName>
        <fullName>Uncharacterized hydrolase SAUSA300_2518</fullName>
        <ecNumber>3.-.-.-</ecNumber>
    </recommendedName>
</protein>
<proteinExistence type="evidence at protein level"/>
<dbReference type="EC" id="3.-.-.-"/>
<dbReference type="EMBL" id="CP000255">
    <property type="protein sequence ID" value="ABD21816.1"/>
    <property type="molecule type" value="Genomic_DNA"/>
</dbReference>
<dbReference type="RefSeq" id="WP_000448901.1">
    <property type="nucleotide sequence ID" value="NZ_CP027476.1"/>
</dbReference>
<dbReference type="PDB" id="8G48">
    <property type="method" value="X-ray"/>
    <property type="resolution" value="1.95 A"/>
    <property type="chains" value="A=1-276"/>
</dbReference>
<dbReference type="PDB" id="8G49">
    <property type="method" value="X-ray"/>
    <property type="resolution" value="1.60 A"/>
    <property type="chains" value="A=1-276"/>
</dbReference>
<dbReference type="PDB" id="8SBQ">
    <property type="method" value="X-ray"/>
    <property type="resolution" value="1.50 A"/>
    <property type="chains" value="A/B=1-276"/>
</dbReference>
<dbReference type="PDB" id="8T87">
    <property type="method" value="X-ray"/>
    <property type="resolution" value="1.62 A"/>
    <property type="chains" value="A/B=1-276"/>
</dbReference>
<dbReference type="PDB" id="8T88">
    <property type="method" value="X-ray"/>
    <property type="resolution" value="1.54 A"/>
    <property type="chains" value="A/B=1-276"/>
</dbReference>
<dbReference type="PDB" id="8TFW">
    <property type="method" value="X-ray"/>
    <property type="resolution" value="1.93 A"/>
    <property type="chains" value="A/B=1-276"/>
</dbReference>
<dbReference type="PDB" id="9DRO">
    <property type="method" value="X-ray"/>
    <property type="resolution" value="1.54 A"/>
    <property type="chains" value="A/B=1-276"/>
</dbReference>
<dbReference type="PDBsum" id="8G48"/>
<dbReference type="PDBsum" id="8G49"/>
<dbReference type="PDBsum" id="8SBQ"/>
<dbReference type="PDBsum" id="8T87"/>
<dbReference type="PDBsum" id="8T88"/>
<dbReference type="PDBsum" id="8TFW"/>
<dbReference type="PDBsum" id="9DRO"/>
<dbReference type="SMR" id="Q2FDS6"/>
<dbReference type="ESTHER" id="staau-SA2367">
    <property type="family name" value="6_AlphaBeta_hydrolase"/>
</dbReference>
<dbReference type="KEGG" id="saa:SAUSA300_2518"/>
<dbReference type="HOGENOM" id="CLU_083329_0_0_9"/>
<dbReference type="OMA" id="INFMEDL"/>
<dbReference type="Proteomes" id="UP000001939">
    <property type="component" value="Chromosome"/>
</dbReference>
<dbReference type="GO" id="GO:0016020">
    <property type="term" value="C:membrane"/>
    <property type="evidence" value="ECO:0007669"/>
    <property type="project" value="TreeGrafter"/>
</dbReference>
<dbReference type="GO" id="GO:0016787">
    <property type="term" value="F:hydrolase activity"/>
    <property type="evidence" value="ECO:0007669"/>
    <property type="project" value="UniProtKB-KW"/>
</dbReference>
<dbReference type="Gene3D" id="3.40.50.1820">
    <property type="entry name" value="alpha/beta hydrolase"/>
    <property type="match status" value="1"/>
</dbReference>
<dbReference type="InterPro" id="IPR000073">
    <property type="entry name" value="AB_hydrolase_1"/>
</dbReference>
<dbReference type="InterPro" id="IPR029058">
    <property type="entry name" value="AB_hydrolase_fold"/>
</dbReference>
<dbReference type="InterPro" id="IPR050266">
    <property type="entry name" value="AB_hydrolase_sf"/>
</dbReference>
<dbReference type="PANTHER" id="PTHR43798:SF33">
    <property type="entry name" value="HYDROLASE, PUTATIVE (AFU_ORTHOLOGUE AFUA_2G14860)-RELATED"/>
    <property type="match status" value="1"/>
</dbReference>
<dbReference type="PANTHER" id="PTHR43798">
    <property type="entry name" value="MONOACYLGLYCEROL LIPASE"/>
    <property type="match status" value="1"/>
</dbReference>
<dbReference type="Pfam" id="PF00561">
    <property type="entry name" value="Abhydrolase_1"/>
    <property type="match status" value="1"/>
</dbReference>
<dbReference type="SUPFAM" id="SSF53474">
    <property type="entry name" value="alpha/beta-Hydrolases"/>
    <property type="match status" value="1"/>
</dbReference>
<evidence type="ECO:0000255" key="1"/>
<evidence type="ECO:0000256" key="2">
    <source>
        <dbReference type="SAM" id="MobiDB-lite"/>
    </source>
</evidence>
<evidence type="ECO:0000305" key="3"/>
<evidence type="ECO:0007829" key="4">
    <source>
        <dbReference type="PDB" id="8SBQ"/>
    </source>
</evidence>
<keyword id="KW-0002">3D-structure</keyword>
<keyword id="KW-0378">Hydrolase</keyword>
<accession>Q2FDS6</accession>
<feature type="chain" id="PRO_0000298617" description="Uncharacterized hydrolase SAUSA300_2518">
    <location>
        <begin position="1"/>
        <end position="276"/>
    </location>
</feature>
<feature type="domain" description="AB hydrolase-1" evidence="1">
    <location>
        <begin position="20"/>
        <end position="137"/>
    </location>
</feature>
<feature type="region of interest" description="Disordered" evidence="2">
    <location>
        <begin position="57"/>
        <end position="76"/>
    </location>
</feature>
<feature type="strand" evidence="4">
    <location>
        <begin position="2"/>
        <end position="6"/>
    </location>
</feature>
<feature type="strand" evidence="4">
    <location>
        <begin position="9"/>
        <end position="25"/>
    </location>
</feature>
<feature type="helix" evidence="4">
    <location>
        <begin position="32"/>
        <end position="35"/>
    </location>
</feature>
<feature type="helix" evidence="4">
    <location>
        <begin position="36"/>
        <end position="42"/>
    </location>
</feature>
<feature type="turn" evidence="4">
    <location>
        <begin position="43"/>
        <end position="45"/>
    </location>
</feature>
<feature type="strand" evidence="4">
    <location>
        <begin position="46"/>
        <end position="51"/>
    </location>
</feature>
<feature type="strand" evidence="4">
    <location>
        <begin position="60"/>
        <end position="63"/>
    </location>
</feature>
<feature type="helix" evidence="4">
    <location>
        <begin position="67"/>
        <end position="70"/>
    </location>
</feature>
<feature type="helix" evidence="4">
    <location>
        <begin position="76"/>
        <end position="92"/>
    </location>
</feature>
<feature type="strand" evidence="4">
    <location>
        <begin position="97"/>
        <end position="102"/>
    </location>
</feature>
<feature type="helix" evidence="4">
    <location>
        <begin position="104"/>
        <end position="115"/>
    </location>
</feature>
<feature type="helix" evidence="4">
    <location>
        <begin position="117"/>
        <end position="119"/>
    </location>
</feature>
<feature type="strand" evidence="4">
    <location>
        <begin position="120"/>
        <end position="127"/>
    </location>
</feature>
<feature type="helix" evidence="4">
    <location>
        <begin position="137"/>
        <end position="166"/>
    </location>
</feature>
<feature type="helix" evidence="4">
    <location>
        <begin position="171"/>
        <end position="178"/>
    </location>
</feature>
<feature type="helix" evidence="4">
    <location>
        <begin position="184"/>
        <end position="200"/>
    </location>
</feature>
<feature type="helix" evidence="4">
    <location>
        <begin position="202"/>
        <end position="206"/>
    </location>
</feature>
<feature type="helix" evidence="4">
    <location>
        <begin position="212"/>
        <end position="216"/>
    </location>
</feature>
<feature type="helix" evidence="4">
    <location>
        <begin position="217"/>
        <end position="221"/>
    </location>
</feature>
<feature type="strand" evidence="4">
    <location>
        <begin position="222"/>
        <end position="227"/>
    </location>
</feature>
<feature type="helix" evidence="4">
    <location>
        <begin position="234"/>
        <end position="246"/>
    </location>
</feature>
<feature type="strand" evidence="4">
    <location>
        <begin position="250"/>
        <end position="256"/>
    </location>
</feature>
<feature type="helix" evidence="4">
    <location>
        <begin position="259"/>
        <end position="262"/>
    </location>
</feature>
<feature type="helix" evidence="4">
    <location>
        <begin position="264"/>
        <end position="275"/>
    </location>
</feature>
<name>Y2518_STAA3</name>
<organism>
    <name type="scientific">Staphylococcus aureus (strain USA300)</name>
    <dbReference type="NCBI Taxonomy" id="367830"/>
    <lineage>
        <taxon>Bacteria</taxon>
        <taxon>Bacillati</taxon>
        <taxon>Bacillota</taxon>
        <taxon>Bacilli</taxon>
        <taxon>Bacillales</taxon>
        <taxon>Staphylococcaceae</taxon>
        <taxon>Staphylococcus</taxon>
    </lineage>
</organism>
<gene>
    <name type="ordered locus">SAUSA300_2518</name>
</gene>
<reference key="1">
    <citation type="journal article" date="2006" name="Lancet">
        <title>Complete genome sequence of USA300, an epidemic clone of community-acquired meticillin-resistant Staphylococcus aureus.</title>
        <authorList>
            <person name="Diep B.A."/>
            <person name="Gill S.R."/>
            <person name="Chang R.F."/>
            <person name="Phan T.H."/>
            <person name="Chen J.H."/>
            <person name="Davidson M.G."/>
            <person name="Lin F."/>
            <person name="Lin J."/>
            <person name="Carleton H.A."/>
            <person name="Mongodin E.F."/>
            <person name="Sensabaugh G.F."/>
            <person name="Perdreau-Remington F."/>
        </authorList>
    </citation>
    <scope>NUCLEOTIDE SEQUENCE [LARGE SCALE GENOMIC DNA]</scope>
    <source>
        <strain>USA300</strain>
    </source>
</reference>
<comment type="similarity">
    <text evidence="3">Belongs to the AB hydrolase superfamily.</text>
</comment>
<sequence length="276" mass="31031">METLELQGAKLRYHQVGQGPVLIFIPGANGTGDIFLPLAEQLKDHFTVVAVDRRDYGESELTEPLPDSASNPDSDYRVKRDAQDIAELAKSLSDEPVYILGSSSGSIVAMHVLKDYPEVVKKIAFHEPPINTFLPDSTYWKDKNDDIVHQILTEGLEKGMKTFGETLNIAPIDAKMMSQPADTEEGRIEQYKRTMFWLEFEIRQYTHSNITLDDFTKYSDKITLLNGTDSRGSFPQDVNFYINKETGIPIVDIPGGHLGYIQKPEGFADVLLNMWG</sequence>